<accession>Q9LXH5</accession>
<comment type="function">
    <text evidence="1">Component of the ESCRT-III complex, which is required for multivesicular bodies (MVBs) formation and sorting of endosomal cargo proteins into MVBs. The ESCRT-III complex is probably involved in the concentration of MVB cargo (By similarity).</text>
</comment>
<comment type="subunit">
    <text evidence="1">Component of the endosomal sorting required for transport complex III (ESCRT-III), composed at least of VPS2, VPS20, VPS24 and VPS32.</text>
</comment>
<comment type="subcellular location">
    <subcellularLocation>
        <location evidence="1">Endosome</location>
    </subcellularLocation>
</comment>
<comment type="alternative products">
    <event type="alternative splicing"/>
    <isoform>
        <id>Q9LXH5-1</id>
        <name>1</name>
        <sequence type="displayed"/>
    </isoform>
    <text>A number of isoforms are produced. According to EST sequences.</text>
</comment>
<comment type="similarity">
    <text evidence="3">Belongs to the SNF7 family.</text>
</comment>
<sequence>MTIKSLLSDIEREERNVHKAIKDSVKRNDLVTAKALAREIVSSRRTVKRLYENKAQVNSISMHLGESIATAVTVGNLSKSGEVMKLVNSLMKAPEIAVTMQAFSKEMTKTGVIEEFVSDAVDNALDSEDIEEEIEEEVDKVLTAIAGETAAELPEAVRKQKMNVPAQKAETLHGEDAIVEGVDAEEELEAIRYRLANVRS</sequence>
<proteinExistence type="inferred from homology"/>
<dbReference type="EMBL" id="AL353992">
    <property type="protein sequence ID" value="CAB89315.1"/>
    <property type="molecule type" value="Genomic_DNA"/>
</dbReference>
<dbReference type="EMBL" id="CP002686">
    <property type="protein sequence ID" value="AEE77977.1"/>
    <property type="molecule type" value="Genomic_DNA"/>
</dbReference>
<dbReference type="PIR" id="T48976">
    <property type="entry name" value="T48976"/>
</dbReference>
<dbReference type="RefSeq" id="NP_190086.1">
    <molecule id="Q9LXH5-1"/>
    <property type="nucleotide sequence ID" value="NM_114369.1"/>
</dbReference>
<dbReference type="SMR" id="Q9LXH5"/>
<dbReference type="FunCoup" id="Q9LXH5">
    <property type="interactions" value="2886"/>
</dbReference>
<dbReference type="STRING" id="3702.Q9LXH5"/>
<dbReference type="TCDB" id="3.A.31.1.2">
    <property type="family name" value="the endosomal sorting complexes required for transport iii (escrt-iii) family"/>
</dbReference>
<dbReference type="GlyGen" id="Q9LXH5">
    <property type="glycosylation" value="1 site"/>
</dbReference>
<dbReference type="PaxDb" id="3702-AT3G45000.1"/>
<dbReference type="EnsemblPlants" id="AT3G45000.1">
    <molecule id="Q9LXH5-1"/>
    <property type="protein sequence ID" value="AT3G45000.1"/>
    <property type="gene ID" value="AT3G45000"/>
</dbReference>
<dbReference type="Gramene" id="AT3G45000.1">
    <molecule id="Q9LXH5-1"/>
    <property type="protein sequence ID" value="AT3G45000.1"/>
    <property type="gene ID" value="AT3G45000"/>
</dbReference>
<dbReference type="KEGG" id="ath:AT3G45000"/>
<dbReference type="Araport" id="AT3G45000"/>
<dbReference type="TAIR" id="AT3G45000">
    <property type="gene designation" value="VPS24.2"/>
</dbReference>
<dbReference type="eggNOG" id="KOG3229">
    <property type="taxonomic scope" value="Eukaryota"/>
</dbReference>
<dbReference type="HOGENOM" id="CLU_069208_0_0_1"/>
<dbReference type="InParanoid" id="Q9LXH5"/>
<dbReference type="OMA" id="KILWEVT"/>
<dbReference type="PhylomeDB" id="Q9LXH5"/>
<dbReference type="PRO" id="PR:Q9LXH5"/>
<dbReference type="Proteomes" id="UP000006548">
    <property type="component" value="Chromosome 3"/>
</dbReference>
<dbReference type="ExpressionAtlas" id="Q9LXH5">
    <property type="expression patterns" value="baseline and differential"/>
</dbReference>
<dbReference type="GO" id="GO:0000815">
    <property type="term" value="C:ESCRT III complex"/>
    <property type="evidence" value="ECO:0000250"/>
    <property type="project" value="TAIR"/>
</dbReference>
<dbReference type="GO" id="GO:0015031">
    <property type="term" value="P:protein transport"/>
    <property type="evidence" value="ECO:0007669"/>
    <property type="project" value="UniProtKB-KW"/>
</dbReference>
<dbReference type="GO" id="GO:0007034">
    <property type="term" value="P:vacuolar transport"/>
    <property type="evidence" value="ECO:0007669"/>
    <property type="project" value="InterPro"/>
</dbReference>
<dbReference type="Gene3D" id="6.10.140.1230">
    <property type="match status" value="1"/>
</dbReference>
<dbReference type="InterPro" id="IPR005024">
    <property type="entry name" value="Snf7_fam"/>
</dbReference>
<dbReference type="PANTHER" id="PTHR10476">
    <property type="entry name" value="CHARGED MULTIVESICULAR BODY PROTEIN"/>
    <property type="match status" value="1"/>
</dbReference>
<dbReference type="Pfam" id="PF03357">
    <property type="entry name" value="Snf7"/>
    <property type="match status" value="1"/>
</dbReference>
<evidence type="ECO:0000250" key="1"/>
<evidence type="ECO:0000255" key="2"/>
<evidence type="ECO:0000305" key="3"/>
<protein>
    <recommendedName>
        <fullName>Putative vacuolar protein sorting-associated protein 24 homolog 2</fullName>
        <shortName>AtVPS24-2</shortName>
    </recommendedName>
    <alternativeName>
        <fullName>Charged multivesicular body protein 3 homolog 2</fullName>
    </alternativeName>
    <alternativeName>
        <fullName>ESCRT-III complex subunit VPS24 homolog 2</fullName>
    </alternativeName>
</protein>
<gene>
    <name type="primary">VPS24-2</name>
    <name type="synonym">CHMP3-2</name>
    <name type="ordered locus">At3g45000</name>
    <name type="ORF">F14D17.70</name>
</gene>
<name>VP242_ARATH</name>
<keyword id="KW-0025">Alternative splicing</keyword>
<keyword id="KW-0175">Coiled coil</keyword>
<keyword id="KW-0967">Endosome</keyword>
<keyword id="KW-0653">Protein transport</keyword>
<keyword id="KW-1185">Reference proteome</keyword>
<keyword id="KW-0813">Transport</keyword>
<reference key="1">
    <citation type="journal article" date="2000" name="Nature">
        <title>Sequence and analysis of chromosome 3 of the plant Arabidopsis thaliana.</title>
        <authorList>
            <person name="Salanoubat M."/>
            <person name="Lemcke K."/>
            <person name="Rieger M."/>
            <person name="Ansorge W."/>
            <person name="Unseld M."/>
            <person name="Fartmann B."/>
            <person name="Valle G."/>
            <person name="Bloecker H."/>
            <person name="Perez-Alonso M."/>
            <person name="Obermaier B."/>
            <person name="Delseny M."/>
            <person name="Boutry M."/>
            <person name="Grivell L.A."/>
            <person name="Mache R."/>
            <person name="Puigdomenech P."/>
            <person name="De Simone V."/>
            <person name="Choisne N."/>
            <person name="Artiguenave F."/>
            <person name="Robert C."/>
            <person name="Brottier P."/>
            <person name="Wincker P."/>
            <person name="Cattolico L."/>
            <person name="Weissenbach J."/>
            <person name="Saurin W."/>
            <person name="Quetier F."/>
            <person name="Schaefer M."/>
            <person name="Mueller-Auer S."/>
            <person name="Gabel C."/>
            <person name="Fuchs M."/>
            <person name="Benes V."/>
            <person name="Wurmbach E."/>
            <person name="Drzonek H."/>
            <person name="Erfle H."/>
            <person name="Jordan N."/>
            <person name="Bangert S."/>
            <person name="Wiedelmann R."/>
            <person name="Kranz H."/>
            <person name="Voss H."/>
            <person name="Holland R."/>
            <person name="Brandt P."/>
            <person name="Nyakatura G."/>
            <person name="Vezzi A."/>
            <person name="D'Angelo M."/>
            <person name="Pallavicini A."/>
            <person name="Toppo S."/>
            <person name="Simionati B."/>
            <person name="Conrad A."/>
            <person name="Hornischer K."/>
            <person name="Kauer G."/>
            <person name="Loehnert T.-H."/>
            <person name="Nordsiek G."/>
            <person name="Reichelt J."/>
            <person name="Scharfe M."/>
            <person name="Schoen O."/>
            <person name="Bargues M."/>
            <person name="Terol J."/>
            <person name="Climent J."/>
            <person name="Navarro P."/>
            <person name="Collado C."/>
            <person name="Perez-Perez A."/>
            <person name="Ottenwaelder B."/>
            <person name="Duchemin D."/>
            <person name="Cooke R."/>
            <person name="Laudie M."/>
            <person name="Berger-Llauro C."/>
            <person name="Purnelle B."/>
            <person name="Masuy D."/>
            <person name="de Haan M."/>
            <person name="Maarse A.C."/>
            <person name="Alcaraz J.-P."/>
            <person name="Cottet A."/>
            <person name="Casacuberta E."/>
            <person name="Monfort A."/>
            <person name="Argiriou A."/>
            <person name="Flores M."/>
            <person name="Liguori R."/>
            <person name="Vitale D."/>
            <person name="Mannhaupt G."/>
            <person name="Haase D."/>
            <person name="Schoof H."/>
            <person name="Rudd S."/>
            <person name="Zaccaria P."/>
            <person name="Mewes H.-W."/>
            <person name="Mayer K.F.X."/>
            <person name="Kaul S."/>
            <person name="Town C.D."/>
            <person name="Koo H.L."/>
            <person name="Tallon L.J."/>
            <person name="Jenkins J."/>
            <person name="Rooney T."/>
            <person name="Rizzo M."/>
            <person name="Walts A."/>
            <person name="Utterback T."/>
            <person name="Fujii C.Y."/>
            <person name="Shea T.P."/>
            <person name="Creasy T.H."/>
            <person name="Haas B."/>
            <person name="Maiti R."/>
            <person name="Wu D."/>
            <person name="Peterson J."/>
            <person name="Van Aken S."/>
            <person name="Pai G."/>
            <person name="Militscher J."/>
            <person name="Sellers P."/>
            <person name="Gill J.E."/>
            <person name="Feldblyum T.V."/>
            <person name="Preuss D."/>
            <person name="Lin X."/>
            <person name="Nierman W.C."/>
            <person name="Salzberg S.L."/>
            <person name="White O."/>
            <person name="Venter J.C."/>
            <person name="Fraser C.M."/>
            <person name="Kaneko T."/>
            <person name="Nakamura Y."/>
            <person name="Sato S."/>
            <person name="Kato T."/>
            <person name="Asamizu E."/>
            <person name="Sasamoto S."/>
            <person name="Kimura T."/>
            <person name="Idesawa K."/>
            <person name="Kawashima K."/>
            <person name="Kishida Y."/>
            <person name="Kiyokawa C."/>
            <person name="Kohara M."/>
            <person name="Matsumoto M."/>
            <person name="Matsuno A."/>
            <person name="Muraki A."/>
            <person name="Nakayama S."/>
            <person name="Nakazaki N."/>
            <person name="Shinpo S."/>
            <person name="Takeuchi C."/>
            <person name="Wada T."/>
            <person name="Watanabe A."/>
            <person name="Yamada M."/>
            <person name="Yasuda M."/>
            <person name="Tabata S."/>
        </authorList>
    </citation>
    <scope>NUCLEOTIDE SEQUENCE [LARGE SCALE GENOMIC DNA]</scope>
    <source>
        <strain>cv. Columbia</strain>
    </source>
</reference>
<reference key="2">
    <citation type="journal article" date="2017" name="Plant J.">
        <title>Araport11: a complete reannotation of the Arabidopsis thaliana reference genome.</title>
        <authorList>
            <person name="Cheng C.Y."/>
            <person name="Krishnakumar V."/>
            <person name="Chan A.P."/>
            <person name="Thibaud-Nissen F."/>
            <person name="Schobel S."/>
            <person name="Town C.D."/>
        </authorList>
    </citation>
    <scope>GENOME REANNOTATION</scope>
    <source>
        <strain>cv. Columbia</strain>
    </source>
</reference>
<reference key="3">
    <citation type="journal article" date="2006" name="Development">
        <title>The Arabidopsis elch mutant reveals functions of an ESCRT component in cytokinesis.</title>
        <authorList>
            <person name="Spitzer C."/>
            <person name="Schellmann S."/>
            <person name="Sabovljevic A."/>
            <person name="Shahriari M."/>
            <person name="Keshavaiah C."/>
            <person name="Bechtold N."/>
            <person name="Herzog M."/>
            <person name="Mueller S."/>
            <person name="Hanisch F.-G."/>
            <person name="Huelskamp M."/>
        </authorList>
    </citation>
    <scope>IDENTIFICATION</scope>
    <scope>NOMENCLATURE</scope>
</reference>
<reference key="4">
    <citation type="journal article" date="2006" name="Trends Plant Sci.">
        <title>Exploring the ESCRTing machinery in eukaryotes.</title>
        <authorList>
            <person name="Winter V."/>
            <person name="Hauser M.-T."/>
        </authorList>
    </citation>
    <scope>IDENTIFICATION</scope>
</reference>
<feature type="chain" id="PRO_0000368199" description="Putative vacuolar protein sorting-associated protein 24 homolog 2">
    <location>
        <begin position="1"/>
        <end position="200"/>
    </location>
</feature>
<feature type="coiled-coil region" evidence="2">
    <location>
        <begin position="2"/>
        <end position="23"/>
    </location>
</feature>
<organism>
    <name type="scientific">Arabidopsis thaliana</name>
    <name type="common">Mouse-ear cress</name>
    <dbReference type="NCBI Taxonomy" id="3702"/>
    <lineage>
        <taxon>Eukaryota</taxon>
        <taxon>Viridiplantae</taxon>
        <taxon>Streptophyta</taxon>
        <taxon>Embryophyta</taxon>
        <taxon>Tracheophyta</taxon>
        <taxon>Spermatophyta</taxon>
        <taxon>Magnoliopsida</taxon>
        <taxon>eudicotyledons</taxon>
        <taxon>Gunneridae</taxon>
        <taxon>Pentapetalae</taxon>
        <taxon>rosids</taxon>
        <taxon>malvids</taxon>
        <taxon>Brassicales</taxon>
        <taxon>Brassicaceae</taxon>
        <taxon>Camelineae</taxon>
        <taxon>Arabidopsis</taxon>
    </lineage>
</organism>